<sequence length="373" mass="40443">MAQLGPRRPLAPPGPPGTLPRPDSRAGARGTRDRVDDLGTDVDSIARIVNSVFVWRVVRADERLKIFRCLTVLTEPLCQVALPNPDPGRALFCEIFLYLTRPKALRLPPNTFFALFFFNRERRYCAIVHLRSVTHPLTPLLCTLTFARIRAATPPEETPDPTTEQLAEEPVVGELDGAYLVPAKTPPEPGACCALGPGAWWHLPSGQIYCWAMDSDLGSLCPPGSRARHLGWLLARITNHPGGCESCAPPPHIDSANALWLSSVVTESCPCVAPCLWAKMAQCTLAVQGDASLCPLLFGHPVDTVTLLQAPRRPCITDRLQEVVGGRCGADNIPPTSAGWRLCVFSSYISRLFATSCPTVARAVARASSSDPE</sequence>
<keyword id="KW-1035">Host cytoplasm</keyword>
<keyword id="KW-1048">Host nucleus</keyword>
<keyword id="KW-0426">Late protein</keyword>
<keyword id="KW-1185">Reference proteome</keyword>
<keyword id="KW-0946">Virion</keyword>
<keyword id="KW-0920">Virion tegument</keyword>
<feature type="chain" id="PRO_0000115949" description="Cytoplasmic envelopment protein 2">
    <location>
        <begin position="1"/>
        <end position="373"/>
    </location>
</feature>
<feature type="region of interest" description="Disordered" evidence="2">
    <location>
        <begin position="1"/>
        <end position="35"/>
    </location>
</feature>
<feature type="compositionally biased region" description="Pro residues" evidence="2">
    <location>
        <begin position="9"/>
        <end position="19"/>
    </location>
</feature>
<feature type="compositionally biased region" description="Basic and acidic residues" evidence="2">
    <location>
        <begin position="22"/>
        <end position="35"/>
    </location>
</feature>
<feature type="mutagenesis site" description="No effect on the interaction with UL11." evidence="5">
    <original>C</original>
    <variation>S</variation>
    <location>
        <position position="221"/>
    </location>
</feature>
<feature type="mutagenesis site" description="No effect on the interaction with UL11." evidence="5">
    <original>C</original>
    <variation>S</variation>
    <location>
        <position position="244"/>
    </location>
</feature>
<feature type="mutagenesis site" description="Complete loss of interaction with UL11." evidence="5">
    <original>C</original>
    <variation>S</variation>
    <location>
        <position position="247"/>
    </location>
</feature>
<feature type="mutagenesis site" description="Complete loss of interaction with UL11." evidence="5">
    <original>C</original>
    <variation>S</variation>
    <location>
        <position position="269"/>
    </location>
</feature>
<feature type="mutagenesis site" description="Complete loss of interaction with UL11." evidence="5">
    <original>C</original>
    <variation>S</variation>
    <location>
        <position position="271"/>
    </location>
</feature>
<feature type="mutagenesis site" description="Complete loss of interaction with UL11." evidence="5">
    <original>C</original>
    <variation>S</variation>
    <location>
        <position position="275"/>
    </location>
</feature>
<gene>
    <name type="primary">UL16</name>
</gene>
<reference key="1">
    <citation type="journal article" date="1988" name="J. Gen. Virol.">
        <title>The complete DNA sequence of the long unique region in the genome of herpes simplex virus type 1.</title>
        <authorList>
            <person name="McGeoch D.J."/>
            <person name="Dalrymple M.A."/>
            <person name="Davison A.J."/>
            <person name="Dolan A."/>
            <person name="Frame M.C."/>
            <person name="McNab D."/>
            <person name="Perry L.J."/>
            <person name="Scott J.E."/>
            <person name="Taylor P."/>
        </authorList>
    </citation>
    <scope>NUCLEOTIDE SEQUENCE [GENOMIC DNA]</scope>
</reference>
<reference key="2">
    <citation type="journal article" date="2003" name="J. Virol.">
        <title>Binding partners for the UL11 tegument protein of herpes simplex virus type 1.</title>
        <authorList>
            <person name="Loomis J.S."/>
            <person name="Courtney R.J."/>
            <person name="Wills J.W."/>
        </authorList>
    </citation>
    <scope>INTERACTION WITH CYTOPLASMIC ENVELOPMENT PROTEIN 3</scope>
    <source>
        <strain>KOS</strain>
    </source>
</reference>
<reference key="3">
    <citation type="journal article" date="2007" name="J. Virol.">
        <title>Dynamic interactions of the UL16 tegument protein with the capsid of herpes simplex virus.</title>
        <authorList>
            <person name="Meckes D.G. Jr."/>
            <person name="Wills J.W."/>
        </authorList>
    </citation>
    <scope>INTERACTION WITH CAPSID</scope>
    <scope>SUBCELLULAR LOCATION</scope>
    <source>
        <strain>KOS</strain>
    </source>
</reference>
<reference key="4">
    <citation type="journal article" date="2008" name="J. Virol.">
        <title>Structural rearrangement within an enveloped virus upon binding to the host cell.</title>
        <authorList>
            <person name="Meckes D.G. Jr."/>
            <person name="Wills J.W."/>
        </authorList>
    </citation>
    <scope>FUNCTION</scope>
    <source>
        <strain>KOS</strain>
    </source>
</reference>
<reference key="5">
    <citation type="journal article" date="2008" name="J. Virol.">
        <title>Analysis of the interaction between the UL11 and UL16 tegument proteins of herpes simplex virus.</title>
        <authorList>
            <person name="Yeh P.-C."/>
            <person name="Meckes D.G. Jr."/>
            <person name="Wills J.W."/>
        </authorList>
    </citation>
    <scope>INTERACTION WITH CYTOPLASMIC ENVELOPMENT PROTEIN 3</scope>
    <scope>MUTAGENESIS OF CYS-221; CYS-244; CYS-247; CYS-269; CYS-271 AND CYS-275</scope>
    <source>
        <strain>KOS</strain>
    </source>
</reference>
<evidence type="ECO:0000255" key="1">
    <source>
        <dbReference type="HAMAP-Rule" id="MF_04039"/>
    </source>
</evidence>
<evidence type="ECO:0000256" key="2">
    <source>
        <dbReference type="SAM" id="MobiDB-lite"/>
    </source>
</evidence>
<evidence type="ECO:0000269" key="3">
    <source>
    </source>
</evidence>
<evidence type="ECO:0000269" key="4">
    <source>
    </source>
</evidence>
<evidence type="ECO:0000269" key="5">
    <source>
    </source>
</evidence>
<evidence type="ECO:0000269" key="6">
    <source>
    </source>
</evidence>
<comment type="function">
    <text evidence="1 6">Plays a critical role in cytoplasmic virus egress. Participates in the final step of tegumentation and envelope acquisition within the host cytoplasm by directly interacting with the capsid. Upon virion binding to target cell, a signaling cascade is triggered to disrupt the interaction with the capsid, thereby preparing capsid uncoating.</text>
</comment>
<comment type="subunit">
    <text evidence="1 3 4 5">Interacts with cytoplasmic envelopment protein 3 and with the capsid.</text>
</comment>
<comment type="interaction">
    <interactant intactId="EBI-7044955">
        <id>P10200</id>
    </interactant>
    <interactant intactId="EBI-7044930">
        <id>P04289</id>
        <label>UL11</label>
    </interactant>
    <organismsDiffer>false</organismsDiffer>
    <experiments>3</experiments>
</comment>
<comment type="subcellular location">
    <subcellularLocation>
        <location evidence="1 4">Virion tegument</location>
    </subcellularLocation>
    <subcellularLocation>
        <location evidence="1 4">Host cytoplasm</location>
    </subcellularLocation>
    <subcellularLocation>
        <location evidence="1 4">Host nucleus</location>
    </subcellularLocation>
    <text evidence="1 4">Localizes in the host nucleus up to 18 hours postinfection, but at later times localizes to punctate, cytoplasmic structures.</text>
</comment>
<comment type="similarity">
    <text evidence="1">Belongs to the herpesviridae cytoplasmic envelopment protein 2 family.</text>
</comment>
<organismHost>
    <name type="scientific">Homo sapiens</name>
    <name type="common">Human</name>
    <dbReference type="NCBI Taxonomy" id="9606"/>
</organismHost>
<organism>
    <name type="scientific">Human herpesvirus 1 (strain 17)</name>
    <name type="common">HHV-1</name>
    <name type="synonym">Human herpes simplex virus 1</name>
    <dbReference type="NCBI Taxonomy" id="10299"/>
    <lineage>
        <taxon>Viruses</taxon>
        <taxon>Duplodnaviria</taxon>
        <taxon>Heunggongvirae</taxon>
        <taxon>Peploviricota</taxon>
        <taxon>Herviviricetes</taxon>
        <taxon>Herpesvirales</taxon>
        <taxon>Orthoherpesviridae</taxon>
        <taxon>Alphaherpesvirinae</taxon>
        <taxon>Simplexvirus</taxon>
        <taxon>Simplexvirus humanalpha1</taxon>
        <taxon>Human herpesvirus 1</taxon>
    </lineage>
</organism>
<proteinExistence type="evidence at protein level"/>
<name>CEP2_HHV11</name>
<accession>P10200</accession>
<protein>
    <recommendedName>
        <fullName evidence="1">Cytoplasmic envelopment protein 2</fullName>
    </recommendedName>
</protein>
<dbReference type="EMBL" id="X14112">
    <property type="protein sequence ID" value="CAA32328.1"/>
    <property type="molecule type" value="Genomic_DNA"/>
</dbReference>
<dbReference type="PIR" id="G30083">
    <property type="entry name" value="WMBET6"/>
</dbReference>
<dbReference type="RefSeq" id="YP_009137090.1">
    <property type="nucleotide sequence ID" value="NC_001806.2"/>
</dbReference>
<dbReference type="IntAct" id="P10200">
    <property type="interactions" value="2"/>
</dbReference>
<dbReference type="MINT" id="P10200"/>
<dbReference type="GeneID" id="24271465"/>
<dbReference type="KEGG" id="vg:24271465"/>
<dbReference type="Proteomes" id="UP000009294">
    <property type="component" value="Segment"/>
</dbReference>
<dbReference type="GO" id="GO:0030430">
    <property type="term" value="C:host cell cytoplasm"/>
    <property type="evidence" value="ECO:0007669"/>
    <property type="project" value="UniProtKB-SubCell"/>
</dbReference>
<dbReference type="GO" id="GO:0042025">
    <property type="term" value="C:host cell nucleus"/>
    <property type="evidence" value="ECO:0007669"/>
    <property type="project" value="UniProtKB-SubCell"/>
</dbReference>
<dbReference type="GO" id="GO:0019033">
    <property type="term" value="C:viral tegument"/>
    <property type="evidence" value="ECO:0007669"/>
    <property type="project" value="UniProtKB-SubCell"/>
</dbReference>
<dbReference type="HAMAP" id="MF_04039">
    <property type="entry name" value="HSV_CEP2"/>
    <property type="match status" value="1"/>
</dbReference>
<dbReference type="InterPro" id="IPR004286">
    <property type="entry name" value="Herpes_UL16/UL94"/>
</dbReference>
<dbReference type="Pfam" id="PF03044">
    <property type="entry name" value="Herpes_UL16"/>
    <property type="match status" value="1"/>
</dbReference>